<comment type="function">
    <text evidence="1">Catalyzes the NAD(P)-dependent oxidation of 4-(phosphooxy)-L-threonine (HTP) into 2-amino-3-oxo-4-(phosphooxy)butyric acid which spontaneously decarboxylates to form 3-amino-2-oxopropyl phosphate (AHAP).</text>
</comment>
<comment type="catalytic activity">
    <reaction evidence="1">
        <text>4-(phosphooxy)-L-threonine + NAD(+) = 3-amino-2-oxopropyl phosphate + CO2 + NADH</text>
        <dbReference type="Rhea" id="RHEA:32275"/>
        <dbReference type="ChEBI" id="CHEBI:16526"/>
        <dbReference type="ChEBI" id="CHEBI:57279"/>
        <dbReference type="ChEBI" id="CHEBI:57540"/>
        <dbReference type="ChEBI" id="CHEBI:57945"/>
        <dbReference type="ChEBI" id="CHEBI:58452"/>
        <dbReference type="EC" id="1.1.1.262"/>
    </reaction>
</comment>
<comment type="cofactor">
    <cofactor evidence="1">
        <name>Zn(2+)</name>
        <dbReference type="ChEBI" id="CHEBI:29105"/>
    </cofactor>
    <cofactor evidence="1">
        <name>Mg(2+)</name>
        <dbReference type="ChEBI" id="CHEBI:18420"/>
    </cofactor>
    <cofactor evidence="1">
        <name>Co(2+)</name>
        <dbReference type="ChEBI" id="CHEBI:48828"/>
    </cofactor>
    <text evidence="1">Binds 1 divalent metal cation per subunit. Can use ions such as Zn(2+), Mg(2+) or Co(2+).</text>
</comment>
<comment type="pathway">
    <text evidence="1">Cofactor biosynthesis; pyridoxine 5'-phosphate biosynthesis; pyridoxine 5'-phosphate from D-erythrose 4-phosphate: step 4/5.</text>
</comment>
<comment type="subunit">
    <text evidence="1">Homodimer.</text>
</comment>
<comment type="subcellular location">
    <subcellularLocation>
        <location evidence="1">Cytoplasm</location>
    </subcellularLocation>
</comment>
<comment type="miscellaneous">
    <text evidence="1">The active site is located at the dimer interface.</text>
</comment>
<comment type="similarity">
    <text evidence="1">Belongs to the PdxA family.</text>
</comment>
<proteinExistence type="inferred from homology"/>
<reference key="1">
    <citation type="journal article" date="2002" name="Nature">
        <title>Comparison of the genomes of two Xanthomonas pathogens with differing host specificities.</title>
        <authorList>
            <person name="da Silva A.C.R."/>
            <person name="Ferro J.A."/>
            <person name="Reinach F.C."/>
            <person name="Farah C.S."/>
            <person name="Furlan L.R."/>
            <person name="Quaggio R.B."/>
            <person name="Monteiro-Vitorello C.B."/>
            <person name="Van Sluys M.A."/>
            <person name="Almeida N.F. Jr."/>
            <person name="Alves L.M.C."/>
            <person name="do Amaral A.M."/>
            <person name="Bertolini M.C."/>
            <person name="Camargo L.E.A."/>
            <person name="Camarotte G."/>
            <person name="Cannavan F."/>
            <person name="Cardozo J."/>
            <person name="Chambergo F."/>
            <person name="Ciapina L.P."/>
            <person name="Cicarelli R.M.B."/>
            <person name="Coutinho L.L."/>
            <person name="Cursino-Santos J.R."/>
            <person name="El-Dorry H."/>
            <person name="Faria J.B."/>
            <person name="Ferreira A.J.S."/>
            <person name="Ferreira R.C.C."/>
            <person name="Ferro M.I.T."/>
            <person name="Formighieri E.F."/>
            <person name="Franco M.C."/>
            <person name="Greggio C.C."/>
            <person name="Gruber A."/>
            <person name="Katsuyama A.M."/>
            <person name="Kishi L.T."/>
            <person name="Leite R.P."/>
            <person name="Lemos E.G.M."/>
            <person name="Lemos M.V.F."/>
            <person name="Locali E.C."/>
            <person name="Machado M.A."/>
            <person name="Madeira A.M.B.N."/>
            <person name="Martinez-Rossi N.M."/>
            <person name="Martins E.C."/>
            <person name="Meidanis J."/>
            <person name="Menck C.F.M."/>
            <person name="Miyaki C.Y."/>
            <person name="Moon D.H."/>
            <person name="Moreira L.M."/>
            <person name="Novo M.T.M."/>
            <person name="Okura V.K."/>
            <person name="Oliveira M.C."/>
            <person name="Oliveira V.R."/>
            <person name="Pereira H.A."/>
            <person name="Rossi A."/>
            <person name="Sena J.A.D."/>
            <person name="Silva C."/>
            <person name="de Souza R.F."/>
            <person name="Spinola L.A.F."/>
            <person name="Takita M.A."/>
            <person name="Tamura R.E."/>
            <person name="Teixeira E.C."/>
            <person name="Tezza R.I.D."/>
            <person name="Trindade dos Santos M."/>
            <person name="Truffi D."/>
            <person name="Tsai S.M."/>
            <person name="White F.F."/>
            <person name="Setubal J.C."/>
            <person name="Kitajima J.P."/>
        </authorList>
    </citation>
    <scope>NUCLEOTIDE SEQUENCE [LARGE SCALE GENOMIC DNA]</scope>
    <source>
        <strain>ATCC 33913 / DSM 3586 / NCPPB 528 / LMG 568 / P 25</strain>
    </source>
</reference>
<gene>
    <name evidence="1" type="primary">pdxA</name>
    <name type="ordered locus">XCC0792</name>
</gene>
<feature type="chain" id="PRO_0000188838" description="4-hydroxythreonine-4-phosphate dehydrogenase">
    <location>
        <begin position="1"/>
        <end position="322"/>
    </location>
</feature>
<feature type="binding site" evidence="1">
    <location>
        <position position="132"/>
    </location>
    <ligand>
        <name>substrate</name>
    </ligand>
</feature>
<feature type="binding site" evidence="1">
    <location>
        <position position="160"/>
    </location>
    <ligand>
        <name>a divalent metal cation</name>
        <dbReference type="ChEBI" id="CHEBI:60240"/>
        <note>ligand shared between dimeric partners</note>
    </ligand>
</feature>
<feature type="binding site" evidence="1">
    <location>
        <position position="205"/>
    </location>
    <ligand>
        <name>a divalent metal cation</name>
        <dbReference type="ChEBI" id="CHEBI:60240"/>
        <note>ligand shared between dimeric partners</note>
    </ligand>
</feature>
<feature type="binding site" evidence="1">
    <location>
        <position position="260"/>
    </location>
    <ligand>
        <name>a divalent metal cation</name>
        <dbReference type="ChEBI" id="CHEBI:60240"/>
        <note>ligand shared between dimeric partners</note>
    </ligand>
</feature>
<feature type="binding site" evidence="1">
    <location>
        <position position="268"/>
    </location>
    <ligand>
        <name>substrate</name>
    </ligand>
</feature>
<feature type="binding site" evidence="1">
    <location>
        <position position="277"/>
    </location>
    <ligand>
        <name>substrate</name>
    </ligand>
</feature>
<feature type="binding site" evidence="1">
    <location>
        <position position="286"/>
    </location>
    <ligand>
        <name>substrate</name>
    </ligand>
</feature>
<protein>
    <recommendedName>
        <fullName evidence="1">4-hydroxythreonine-4-phosphate dehydrogenase</fullName>
        <ecNumber evidence="1">1.1.1.262</ecNumber>
    </recommendedName>
    <alternativeName>
        <fullName evidence="1">4-(phosphohydroxy)-L-threonine dehydrogenase</fullName>
    </alternativeName>
</protein>
<evidence type="ECO:0000255" key="1">
    <source>
        <dbReference type="HAMAP-Rule" id="MF_00536"/>
    </source>
</evidence>
<sequence length="322" mass="33445">MVPSLALVPGEPAGIGPELCIRLAQQPRSDAHLIAYADPDTLHSAAKALCLSVRLLDPDQHARLPGDLPLHPVRQAAPTRFGTPDPANAAAVIAGLLGAAGDCLSGKLQGIVTGPVHKAVINAGGIAYTGTTELLAAQAGCPVVMMLANSIVRVALVTTHLPLRAVPEAITAEALARCLRITATAMQRDFGLEHPRIAVLGLNPHAGEDGLLGREELDVIIPVLDQLRSEGMQLIGPLPADTAFLPQKLTDFDAVVAMYHDQGLPVLKYSGFEQAVNITLGLPYPRVAVDHGTALELAGRGVADPSSLLAATALCARLAARS</sequence>
<dbReference type="EC" id="1.1.1.262" evidence="1"/>
<dbReference type="EMBL" id="AE008922">
    <property type="protein sequence ID" value="AAM40107.1"/>
    <property type="molecule type" value="Genomic_DNA"/>
</dbReference>
<dbReference type="RefSeq" id="NP_636183.1">
    <property type="nucleotide sequence ID" value="NC_003902.1"/>
</dbReference>
<dbReference type="RefSeq" id="WP_011036028.1">
    <property type="nucleotide sequence ID" value="NC_003902.1"/>
</dbReference>
<dbReference type="SMR" id="Q8PCE2"/>
<dbReference type="STRING" id="190485.XCC0792"/>
<dbReference type="EnsemblBacteria" id="AAM40107">
    <property type="protein sequence ID" value="AAM40107"/>
    <property type="gene ID" value="XCC0792"/>
</dbReference>
<dbReference type="KEGG" id="xcc:XCC0792"/>
<dbReference type="PATRIC" id="fig|190485.4.peg.862"/>
<dbReference type="eggNOG" id="COG1995">
    <property type="taxonomic scope" value="Bacteria"/>
</dbReference>
<dbReference type="HOGENOM" id="CLU_040168_2_0_6"/>
<dbReference type="OrthoDB" id="9801783at2"/>
<dbReference type="UniPathway" id="UPA00244">
    <property type="reaction ID" value="UER00312"/>
</dbReference>
<dbReference type="Proteomes" id="UP000001010">
    <property type="component" value="Chromosome"/>
</dbReference>
<dbReference type="GO" id="GO:0005737">
    <property type="term" value="C:cytoplasm"/>
    <property type="evidence" value="ECO:0007669"/>
    <property type="project" value="UniProtKB-SubCell"/>
</dbReference>
<dbReference type="GO" id="GO:0050570">
    <property type="term" value="F:4-hydroxythreonine-4-phosphate dehydrogenase activity"/>
    <property type="evidence" value="ECO:0000318"/>
    <property type="project" value="GO_Central"/>
</dbReference>
<dbReference type="GO" id="GO:0050897">
    <property type="term" value="F:cobalt ion binding"/>
    <property type="evidence" value="ECO:0007669"/>
    <property type="project" value="UniProtKB-UniRule"/>
</dbReference>
<dbReference type="GO" id="GO:0000287">
    <property type="term" value="F:magnesium ion binding"/>
    <property type="evidence" value="ECO:0007669"/>
    <property type="project" value="UniProtKB-UniRule"/>
</dbReference>
<dbReference type="GO" id="GO:0051287">
    <property type="term" value="F:NAD binding"/>
    <property type="evidence" value="ECO:0007669"/>
    <property type="project" value="InterPro"/>
</dbReference>
<dbReference type="GO" id="GO:0008270">
    <property type="term" value="F:zinc ion binding"/>
    <property type="evidence" value="ECO:0007669"/>
    <property type="project" value="UniProtKB-UniRule"/>
</dbReference>
<dbReference type="GO" id="GO:0042823">
    <property type="term" value="P:pyridoxal phosphate biosynthetic process"/>
    <property type="evidence" value="ECO:0000318"/>
    <property type="project" value="GO_Central"/>
</dbReference>
<dbReference type="GO" id="GO:0008615">
    <property type="term" value="P:pyridoxine biosynthetic process"/>
    <property type="evidence" value="ECO:0000318"/>
    <property type="project" value="GO_Central"/>
</dbReference>
<dbReference type="Gene3D" id="3.40.718.10">
    <property type="entry name" value="Isopropylmalate Dehydrogenase"/>
    <property type="match status" value="1"/>
</dbReference>
<dbReference type="HAMAP" id="MF_00536">
    <property type="entry name" value="PdxA"/>
    <property type="match status" value="1"/>
</dbReference>
<dbReference type="InterPro" id="IPR037510">
    <property type="entry name" value="PdxA"/>
</dbReference>
<dbReference type="InterPro" id="IPR005255">
    <property type="entry name" value="PdxA_fam"/>
</dbReference>
<dbReference type="NCBIfam" id="TIGR00557">
    <property type="entry name" value="pdxA"/>
    <property type="match status" value="1"/>
</dbReference>
<dbReference type="PANTHER" id="PTHR30004">
    <property type="entry name" value="4-HYDROXYTHREONINE-4-PHOSPHATE DEHYDROGENASE"/>
    <property type="match status" value="1"/>
</dbReference>
<dbReference type="PANTHER" id="PTHR30004:SF5">
    <property type="entry name" value="4-HYDROXYTHREONINE-4-PHOSPHATE DEHYDROGENASE"/>
    <property type="match status" value="1"/>
</dbReference>
<dbReference type="Pfam" id="PF04166">
    <property type="entry name" value="PdxA"/>
    <property type="match status" value="1"/>
</dbReference>
<dbReference type="SUPFAM" id="SSF53659">
    <property type="entry name" value="Isocitrate/Isopropylmalate dehydrogenase-like"/>
    <property type="match status" value="1"/>
</dbReference>
<name>PDXA_XANCP</name>
<organism>
    <name type="scientific">Xanthomonas campestris pv. campestris (strain ATCC 33913 / DSM 3586 / NCPPB 528 / LMG 568 / P 25)</name>
    <dbReference type="NCBI Taxonomy" id="190485"/>
    <lineage>
        <taxon>Bacteria</taxon>
        <taxon>Pseudomonadati</taxon>
        <taxon>Pseudomonadota</taxon>
        <taxon>Gammaproteobacteria</taxon>
        <taxon>Lysobacterales</taxon>
        <taxon>Lysobacteraceae</taxon>
        <taxon>Xanthomonas</taxon>
    </lineage>
</organism>
<keyword id="KW-0170">Cobalt</keyword>
<keyword id="KW-0963">Cytoplasm</keyword>
<keyword id="KW-0460">Magnesium</keyword>
<keyword id="KW-0479">Metal-binding</keyword>
<keyword id="KW-0520">NAD</keyword>
<keyword id="KW-0521">NADP</keyword>
<keyword id="KW-0560">Oxidoreductase</keyword>
<keyword id="KW-0664">Pyridoxine biosynthesis</keyword>
<keyword id="KW-1185">Reference proteome</keyword>
<keyword id="KW-0862">Zinc</keyword>
<accession>Q8PCE2</accession>